<organism>
    <name type="scientific">Salmonella paratyphi C (strain RKS4594)</name>
    <dbReference type="NCBI Taxonomy" id="476213"/>
    <lineage>
        <taxon>Bacteria</taxon>
        <taxon>Pseudomonadati</taxon>
        <taxon>Pseudomonadota</taxon>
        <taxon>Gammaproteobacteria</taxon>
        <taxon>Enterobacterales</taxon>
        <taxon>Enterobacteriaceae</taxon>
        <taxon>Salmonella</taxon>
    </lineage>
</organism>
<reference key="1">
    <citation type="journal article" date="2009" name="PLoS ONE">
        <title>Salmonella paratyphi C: genetic divergence from Salmonella choleraesuis and pathogenic convergence with Salmonella typhi.</title>
        <authorList>
            <person name="Liu W.-Q."/>
            <person name="Feng Y."/>
            <person name="Wang Y."/>
            <person name="Zou Q.-H."/>
            <person name="Chen F."/>
            <person name="Guo J.-T."/>
            <person name="Peng Y.-H."/>
            <person name="Jin Y."/>
            <person name="Li Y.-G."/>
            <person name="Hu S.-N."/>
            <person name="Johnston R.N."/>
            <person name="Liu G.-R."/>
            <person name="Liu S.-L."/>
        </authorList>
    </citation>
    <scope>NUCLEOTIDE SEQUENCE [LARGE SCALE GENOMIC DNA]</scope>
    <source>
        <strain>RKS4594</strain>
    </source>
</reference>
<dbReference type="EMBL" id="CP000857">
    <property type="protein sequence ID" value="ACN46110.1"/>
    <property type="molecule type" value="Genomic_DNA"/>
</dbReference>
<dbReference type="RefSeq" id="WP_001540172.1">
    <property type="nucleotide sequence ID" value="NC_012125.1"/>
</dbReference>
<dbReference type="SMR" id="C0Q378"/>
<dbReference type="KEGG" id="sei:SPC_1974"/>
<dbReference type="HOGENOM" id="CLU_099590_0_0_6"/>
<dbReference type="Proteomes" id="UP000001599">
    <property type="component" value="Chromosome"/>
</dbReference>
<dbReference type="Gene3D" id="3.10.450.50">
    <property type="match status" value="1"/>
</dbReference>
<dbReference type="HAMAP" id="MF_00612">
    <property type="entry name" value="UPF0225"/>
    <property type="match status" value="1"/>
</dbReference>
<dbReference type="InterPro" id="IPR032710">
    <property type="entry name" value="NTF2-like_dom_sf"/>
</dbReference>
<dbReference type="InterPro" id="IPR004027">
    <property type="entry name" value="SEC_C_motif"/>
</dbReference>
<dbReference type="InterPro" id="IPR023006">
    <property type="entry name" value="UPF0225"/>
</dbReference>
<dbReference type="InterPro" id="IPR048469">
    <property type="entry name" value="YchJ-like_M"/>
</dbReference>
<dbReference type="NCBIfam" id="NF002449">
    <property type="entry name" value="PRK01617.1"/>
    <property type="match status" value="1"/>
</dbReference>
<dbReference type="NCBIfam" id="NF002486">
    <property type="entry name" value="PRK01752.1"/>
    <property type="match status" value="1"/>
</dbReference>
<dbReference type="PANTHER" id="PTHR33747:SF1">
    <property type="entry name" value="ADENYLATE CYCLASE-ASSOCIATED CAP C-TERMINAL DOMAIN-CONTAINING PROTEIN"/>
    <property type="match status" value="1"/>
</dbReference>
<dbReference type="PANTHER" id="PTHR33747">
    <property type="entry name" value="UPF0225 PROTEIN SCO1677"/>
    <property type="match status" value="1"/>
</dbReference>
<dbReference type="Pfam" id="PF02810">
    <property type="entry name" value="SEC-C"/>
    <property type="match status" value="2"/>
</dbReference>
<dbReference type="Pfam" id="PF17775">
    <property type="entry name" value="YchJ_M-like"/>
    <property type="match status" value="1"/>
</dbReference>
<dbReference type="SUPFAM" id="SSF54427">
    <property type="entry name" value="NTF2-like"/>
    <property type="match status" value="1"/>
</dbReference>
<dbReference type="SUPFAM" id="SSF103642">
    <property type="entry name" value="Sec-C motif"/>
    <property type="match status" value="1"/>
</dbReference>
<evidence type="ECO:0000255" key="1">
    <source>
        <dbReference type="HAMAP-Rule" id="MF_00612"/>
    </source>
</evidence>
<proteinExistence type="inferred from homology"/>
<feature type="chain" id="PRO_1000200401" description="UPF0225 protein YchJ">
    <location>
        <begin position="1"/>
        <end position="152"/>
    </location>
</feature>
<accession>C0Q378</accession>
<sequence length="152" mass="17052">MSQPCPCGSADEYSLCCGRIVSGERVAPDPSHLMRSRYCAFVMKDADYLIKSWHPTCNAAAFRDDIIAGFANTRWLGLTIFEHTWSEAENTGYVSFIARFSEQGKTGAIIERSRFIKENGQWYYIDGTRPQLGRNDPCPCGSGKKFKKCCGQ</sequence>
<name>YCHJ_SALPC</name>
<gene>
    <name evidence="1" type="primary">ychJ</name>
    <name type="ordered locus">SPC_1974</name>
</gene>
<protein>
    <recommendedName>
        <fullName evidence="1">UPF0225 protein YchJ</fullName>
    </recommendedName>
</protein>
<comment type="similarity">
    <text evidence="1">Belongs to the UPF0225 family.</text>
</comment>